<sequence length="468" mass="50063">MTGKTLYDKIWDAHLAHEAEDGTSLLYIDRHLVHEVTSPQAFEGLRMAGRSVHAPDKTIAVPDHNVPTTEGRDDPKNMTEDSAIQVAALDKNAKDFGIHYYPVSDVRQGIVHIVGPEQGWTLPGMTVVCGDSHTATHGAFGALAHGIGTSEVEHVLATQTLIQKKSKNMKVEITGKLAPGVTAKDITLTVIGRTGTAGGTGYVIEYCGEAIRDLSMEGRMTVCNMAIEGGARAGIIAPDEKTFEYCMGRPHAPKGAQWEAALAWWKTLYSDDDAHWDEVVTIRGEDIAPVVTWGTSPEDVLPITAEVPAADSFEGGKVGAAQRSLDYMGLTAGTPLDQIEIDTVFIGSCTNGRIEDLRAAASILKGKKVKDGLRAMIVPGSGLVRAQAEEEGLADIFKDAGFEWRLAGCSMCLAMNPDQLSPGERCAATSNRNFEGRQGRGGRTHLMSPAMAAAAAITGRLTDVRELM</sequence>
<reference key="1">
    <citation type="submission" date="2006-02" db="EMBL/GenBank/DDBJ databases">
        <title>Complete sequence of chromosome of Jannaschia sp. CCS1.</title>
        <authorList>
            <consortium name="US DOE Joint Genome Institute"/>
            <person name="Copeland A."/>
            <person name="Lucas S."/>
            <person name="Lapidus A."/>
            <person name="Barry K."/>
            <person name="Detter J.C."/>
            <person name="Glavina del Rio T."/>
            <person name="Hammon N."/>
            <person name="Israni S."/>
            <person name="Pitluck S."/>
            <person name="Brettin T."/>
            <person name="Bruce D."/>
            <person name="Han C."/>
            <person name="Tapia R."/>
            <person name="Gilna P."/>
            <person name="Chertkov O."/>
            <person name="Saunders E."/>
            <person name="Schmutz J."/>
            <person name="Larimer F."/>
            <person name="Land M."/>
            <person name="Kyrpides N."/>
            <person name="Lykidis A."/>
            <person name="Moran M.A."/>
            <person name="Belas R."/>
            <person name="Ye W."/>
            <person name="Buchan A."/>
            <person name="Gonzalez J.M."/>
            <person name="Schell M.A."/>
            <person name="Richardson P."/>
        </authorList>
    </citation>
    <scope>NUCLEOTIDE SEQUENCE [LARGE SCALE GENOMIC DNA]</scope>
    <source>
        <strain>CCS1</strain>
    </source>
</reference>
<feature type="chain" id="PRO_1000063563" description="3-isopropylmalate dehydratase large subunit">
    <location>
        <begin position="1"/>
        <end position="468"/>
    </location>
</feature>
<feature type="binding site" evidence="1">
    <location>
        <position position="349"/>
    </location>
    <ligand>
        <name>[4Fe-4S] cluster</name>
        <dbReference type="ChEBI" id="CHEBI:49883"/>
    </ligand>
</feature>
<feature type="binding site" evidence="1">
    <location>
        <position position="409"/>
    </location>
    <ligand>
        <name>[4Fe-4S] cluster</name>
        <dbReference type="ChEBI" id="CHEBI:49883"/>
    </ligand>
</feature>
<feature type="binding site" evidence="1">
    <location>
        <position position="412"/>
    </location>
    <ligand>
        <name>[4Fe-4S] cluster</name>
        <dbReference type="ChEBI" id="CHEBI:49883"/>
    </ligand>
</feature>
<dbReference type="EC" id="4.2.1.33" evidence="1"/>
<dbReference type="EMBL" id="CP000264">
    <property type="protein sequence ID" value="ABD53052.1"/>
    <property type="molecule type" value="Genomic_DNA"/>
</dbReference>
<dbReference type="RefSeq" id="WP_011453261.1">
    <property type="nucleotide sequence ID" value="NC_007802.1"/>
</dbReference>
<dbReference type="SMR" id="Q28W60"/>
<dbReference type="STRING" id="290400.Jann_0135"/>
<dbReference type="KEGG" id="jan:Jann_0135"/>
<dbReference type="eggNOG" id="COG0065">
    <property type="taxonomic scope" value="Bacteria"/>
</dbReference>
<dbReference type="HOGENOM" id="CLU_006714_3_4_5"/>
<dbReference type="OrthoDB" id="9802769at2"/>
<dbReference type="UniPathway" id="UPA00048">
    <property type="reaction ID" value="UER00071"/>
</dbReference>
<dbReference type="Proteomes" id="UP000008326">
    <property type="component" value="Chromosome"/>
</dbReference>
<dbReference type="GO" id="GO:0003861">
    <property type="term" value="F:3-isopropylmalate dehydratase activity"/>
    <property type="evidence" value="ECO:0007669"/>
    <property type="project" value="UniProtKB-UniRule"/>
</dbReference>
<dbReference type="GO" id="GO:0051539">
    <property type="term" value="F:4 iron, 4 sulfur cluster binding"/>
    <property type="evidence" value="ECO:0007669"/>
    <property type="project" value="UniProtKB-KW"/>
</dbReference>
<dbReference type="GO" id="GO:0046872">
    <property type="term" value="F:metal ion binding"/>
    <property type="evidence" value="ECO:0007669"/>
    <property type="project" value="UniProtKB-KW"/>
</dbReference>
<dbReference type="GO" id="GO:0009098">
    <property type="term" value="P:L-leucine biosynthetic process"/>
    <property type="evidence" value="ECO:0007669"/>
    <property type="project" value="UniProtKB-UniRule"/>
</dbReference>
<dbReference type="CDD" id="cd01583">
    <property type="entry name" value="IPMI"/>
    <property type="match status" value="1"/>
</dbReference>
<dbReference type="FunFam" id="3.30.499.10:FF:000006">
    <property type="entry name" value="3-isopropylmalate dehydratase large subunit"/>
    <property type="match status" value="1"/>
</dbReference>
<dbReference type="FunFam" id="3.30.499.10:FF:000007">
    <property type="entry name" value="3-isopropylmalate dehydratase large subunit"/>
    <property type="match status" value="1"/>
</dbReference>
<dbReference type="Gene3D" id="3.30.499.10">
    <property type="entry name" value="Aconitase, domain 3"/>
    <property type="match status" value="2"/>
</dbReference>
<dbReference type="HAMAP" id="MF_01026">
    <property type="entry name" value="LeuC_type1"/>
    <property type="match status" value="1"/>
</dbReference>
<dbReference type="InterPro" id="IPR004430">
    <property type="entry name" value="3-IsopropMal_deHydase_lsu"/>
</dbReference>
<dbReference type="InterPro" id="IPR015931">
    <property type="entry name" value="Acnase/IPM_dHydase_lsu_aba_1/3"/>
</dbReference>
<dbReference type="InterPro" id="IPR001030">
    <property type="entry name" value="Acoase/IPM_deHydtase_lsu_aba"/>
</dbReference>
<dbReference type="InterPro" id="IPR018136">
    <property type="entry name" value="Aconitase_4Fe-4S_BS"/>
</dbReference>
<dbReference type="InterPro" id="IPR036008">
    <property type="entry name" value="Aconitase_4Fe-4S_dom"/>
</dbReference>
<dbReference type="InterPro" id="IPR050067">
    <property type="entry name" value="IPM_dehydratase_rel_enz"/>
</dbReference>
<dbReference type="InterPro" id="IPR033941">
    <property type="entry name" value="IPMI_cat"/>
</dbReference>
<dbReference type="NCBIfam" id="TIGR00170">
    <property type="entry name" value="leuC"/>
    <property type="match status" value="1"/>
</dbReference>
<dbReference type="NCBIfam" id="NF004016">
    <property type="entry name" value="PRK05478.1"/>
    <property type="match status" value="1"/>
</dbReference>
<dbReference type="NCBIfam" id="NF009116">
    <property type="entry name" value="PRK12466.1"/>
    <property type="match status" value="1"/>
</dbReference>
<dbReference type="PANTHER" id="PTHR43822:SF9">
    <property type="entry name" value="3-ISOPROPYLMALATE DEHYDRATASE"/>
    <property type="match status" value="1"/>
</dbReference>
<dbReference type="PANTHER" id="PTHR43822">
    <property type="entry name" value="HOMOACONITASE, MITOCHONDRIAL-RELATED"/>
    <property type="match status" value="1"/>
</dbReference>
<dbReference type="Pfam" id="PF00330">
    <property type="entry name" value="Aconitase"/>
    <property type="match status" value="1"/>
</dbReference>
<dbReference type="PRINTS" id="PR00415">
    <property type="entry name" value="ACONITASE"/>
</dbReference>
<dbReference type="SUPFAM" id="SSF53732">
    <property type="entry name" value="Aconitase iron-sulfur domain"/>
    <property type="match status" value="1"/>
</dbReference>
<dbReference type="PROSITE" id="PS00450">
    <property type="entry name" value="ACONITASE_1"/>
    <property type="match status" value="1"/>
</dbReference>
<dbReference type="PROSITE" id="PS01244">
    <property type="entry name" value="ACONITASE_2"/>
    <property type="match status" value="1"/>
</dbReference>
<organism>
    <name type="scientific">Jannaschia sp. (strain CCS1)</name>
    <dbReference type="NCBI Taxonomy" id="290400"/>
    <lineage>
        <taxon>Bacteria</taxon>
        <taxon>Pseudomonadati</taxon>
        <taxon>Pseudomonadota</taxon>
        <taxon>Alphaproteobacteria</taxon>
        <taxon>Rhodobacterales</taxon>
        <taxon>Roseobacteraceae</taxon>
        <taxon>Jannaschia</taxon>
    </lineage>
</organism>
<protein>
    <recommendedName>
        <fullName evidence="1">3-isopropylmalate dehydratase large subunit</fullName>
        <ecNumber evidence="1">4.2.1.33</ecNumber>
    </recommendedName>
    <alternativeName>
        <fullName evidence="1">Alpha-IPM isomerase</fullName>
        <shortName evidence="1">IPMI</shortName>
    </alternativeName>
    <alternativeName>
        <fullName evidence="1">Isopropylmalate isomerase</fullName>
    </alternativeName>
</protein>
<proteinExistence type="inferred from homology"/>
<name>LEUC_JANSC</name>
<gene>
    <name evidence="1" type="primary">leuC</name>
    <name type="ordered locus">Jann_0135</name>
</gene>
<keyword id="KW-0004">4Fe-4S</keyword>
<keyword id="KW-0028">Amino-acid biosynthesis</keyword>
<keyword id="KW-0100">Branched-chain amino acid biosynthesis</keyword>
<keyword id="KW-0408">Iron</keyword>
<keyword id="KW-0411">Iron-sulfur</keyword>
<keyword id="KW-0432">Leucine biosynthesis</keyword>
<keyword id="KW-0456">Lyase</keyword>
<keyword id="KW-0479">Metal-binding</keyword>
<keyword id="KW-1185">Reference proteome</keyword>
<accession>Q28W60</accession>
<comment type="function">
    <text evidence="1">Catalyzes the isomerization between 2-isopropylmalate and 3-isopropylmalate, via the formation of 2-isopropylmaleate.</text>
</comment>
<comment type="catalytic activity">
    <reaction evidence="1">
        <text>(2R,3S)-3-isopropylmalate = (2S)-2-isopropylmalate</text>
        <dbReference type="Rhea" id="RHEA:32287"/>
        <dbReference type="ChEBI" id="CHEBI:1178"/>
        <dbReference type="ChEBI" id="CHEBI:35121"/>
        <dbReference type="EC" id="4.2.1.33"/>
    </reaction>
</comment>
<comment type="cofactor">
    <cofactor evidence="1">
        <name>[4Fe-4S] cluster</name>
        <dbReference type="ChEBI" id="CHEBI:49883"/>
    </cofactor>
    <text evidence="1">Binds 1 [4Fe-4S] cluster per subunit.</text>
</comment>
<comment type="pathway">
    <text evidence="1">Amino-acid biosynthesis; L-leucine biosynthesis; L-leucine from 3-methyl-2-oxobutanoate: step 2/4.</text>
</comment>
<comment type="subunit">
    <text evidence="1">Heterodimer of LeuC and LeuD.</text>
</comment>
<comment type="similarity">
    <text evidence="1">Belongs to the aconitase/IPM isomerase family. LeuC type 1 subfamily.</text>
</comment>
<evidence type="ECO:0000255" key="1">
    <source>
        <dbReference type="HAMAP-Rule" id="MF_01026"/>
    </source>
</evidence>